<dbReference type="EMBL" id="BT021148">
    <property type="protein sequence ID" value="AAX31330.1"/>
    <property type="molecule type" value="mRNA"/>
</dbReference>
<dbReference type="EMBL" id="BC109925">
    <property type="protein sequence ID" value="AAI09926.1"/>
    <property type="molecule type" value="mRNA"/>
</dbReference>
<dbReference type="RefSeq" id="NP_001014883.2">
    <property type="nucleotide sequence ID" value="NM_001014883.2"/>
</dbReference>
<dbReference type="RefSeq" id="XP_005219286.1">
    <property type="nucleotide sequence ID" value="XM_005219229.3"/>
</dbReference>
<dbReference type="SMR" id="Q5BIS6"/>
<dbReference type="FunCoup" id="Q5BIS6">
    <property type="interactions" value="1509"/>
</dbReference>
<dbReference type="STRING" id="9913.ENSBTAP00000004229"/>
<dbReference type="PaxDb" id="9913-ENSBTAP00000004229"/>
<dbReference type="Ensembl" id="ENSBTAT00000004229.5">
    <property type="protein sequence ID" value="ENSBTAP00000004229.4"/>
    <property type="gene ID" value="ENSBTAG00000003264.6"/>
</dbReference>
<dbReference type="GeneID" id="509622"/>
<dbReference type="KEGG" id="bta:509622"/>
<dbReference type="CTD" id="7376"/>
<dbReference type="VEuPathDB" id="HostDB:ENSBTAG00000003264"/>
<dbReference type="VGNC" id="VGNC:32230">
    <property type="gene designation" value="NR1H2"/>
</dbReference>
<dbReference type="eggNOG" id="KOG3575">
    <property type="taxonomic scope" value="Eukaryota"/>
</dbReference>
<dbReference type="GeneTree" id="ENSGT00940000161465"/>
<dbReference type="InParanoid" id="Q5BIS6"/>
<dbReference type="OMA" id="PCKEEMS"/>
<dbReference type="OrthoDB" id="5837785at2759"/>
<dbReference type="Reactome" id="R-BTA-383280">
    <property type="pathway name" value="Nuclear Receptor transcription pathway"/>
</dbReference>
<dbReference type="Reactome" id="R-BTA-4090294">
    <property type="pathway name" value="SUMOylation of intracellular receptors"/>
</dbReference>
<dbReference type="Reactome" id="R-BTA-8866427">
    <property type="pathway name" value="VLDLR internalisation and degradation"/>
</dbReference>
<dbReference type="Reactome" id="R-BTA-9029569">
    <property type="pathway name" value="NR1H3 &amp; NR1H2 regulate gene expression linked to cholesterol transport and efflux"/>
</dbReference>
<dbReference type="Reactome" id="R-BTA-9623433">
    <property type="pathway name" value="NR1H2 &amp; NR1H3 regulate gene expression to control bile acid homeostasis"/>
</dbReference>
<dbReference type="Proteomes" id="UP000009136">
    <property type="component" value="Chromosome 18"/>
</dbReference>
<dbReference type="Bgee" id="ENSBTAG00000003264">
    <property type="expression patterns" value="Expressed in adenohypophysis and 105 other cell types or tissues"/>
</dbReference>
<dbReference type="GO" id="GO:0005634">
    <property type="term" value="C:nucleus"/>
    <property type="evidence" value="ECO:0000318"/>
    <property type="project" value="GO_Central"/>
</dbReference>
<dbReference type="GO" id="GO:0090575">
    <property type="term" value="C:RNA polymerase II transcription regulator complex"/>
    <property type="evidence" value="ECO:0000318"/>
    <property type="project" value="GO_Central"/>
</dbReference>
<dbReference type="GO" id="GO:0004879">
    <property type="term" value="F:nuclear receptor activity"/>
    <property type="evidence" value="ECO:0000318"/>
    <property type="project" value="GO_Central"/>
</dbReference>
<dbReference type="GO" id="GO:0000978">
    <property type="term" value="F:RNA polymerase II cis-regulatory region sequence-specific DNA binding"/>
    <property type="evidence" value="ECO:0000318"/>
    <property type="project" value="GO_Central"/>
</dbReference>
<dbReference type="GO" id="GO:0008270">
    <property type="term" value="F:zinc ion binding"/>
    <property type="evidence" value="ECO:0007669"/>
    <property type="project" value="UniProtKB-KW"/>
</dbReference>
<dbReference type="GO" id="GO:0030154">
    <property type="term" value="P:cell differentiation"/>
    <property type="evidence" value="ECO:0000318"/>
    <property type="project" value="GO_Central"/>
</dbReference>
<dbReference type="GO" id="GO:0042632">
    <property type="term" value="P:cholesterol homeostasis"/>
    <property type="evidence" value="ECO:0000250"/>
    <property type="project" value="UniProtKB"/>
</dbReference>
<dbReference type="GO" id="GO:0030522">
    <property type="term" value="P:intracellular receptor signaling pathway"/>
    <property type="evidence" value="ECO:0000318"/>
    <property type="project" value="GO_Central"/>
</dbReference>
<dbReference type="GO" id="GO:0050728">
    <property type="term" value="P:negative regulation of inflammatory response"/>
    <property type="evidence" value="ECO:0000318"/>
    <property type="project" value="GO_Central"/>
</dbReference>
<dbReference type="GO" id="GO:1903573">
    <property type="term" value="P:negative regulation of response to endoplasmic reticulum stress"/>
    <property type="evidence" value="ECO:0000250"/>
    <property type="project" value="UniProtKB"/>
</dbReference>
<dbReference type="GO" id="GO:0000122">
    <property type="term" value="P:negative regulation of transcription by RNA polymerase II"/>
    <property type="evidence" value="ECO:0000318"/>
    <property type="project" value="GO_Central"/>
</dbReference>
<dbReference type="GO" id="GO:0036151">
    <property type="term" value="P:phosphatidylcholine acyl-chain remodeling"/>
    <property type="evidence" value="ECO:0000250"/>
    <property type="project" value="UniProtKB"/>
</dbReference>
<dbReference type="GO" id="GO:0010875">
    <property type="term" value="P:positive regulation of cholesterol efflux"/>
    <property type="evidence" value="ECO:0000318"/>
    <property type="project" value="GO_Central"/>
</dbReference>
<dbReference type="GO" id="GO:0045893">
    <property type="term" value="P:positive regulation of DNA-templated transcription"/>
    <property type="evidence" value="ECO:0000250"/>
    <property type="project" value="UniProtKB"/>
</dbReference>
<dbReference type="GO" id="GO:0045944">
    <property type="term" value="P:positive regulation of transcription by RNA polymerase II"/>
    <property type="evidence" value="ECO:0000318"/>
    <property type="project" value="GO_Central"/>
</dbReference>
<dbReference type="GO" id="GO:0010883">
    <property type="term" value="P:regulation of lipid storage"/>
    <property type="evidence" value="ECO:0000318"/>
    <property type="project" value="GO_Central"/>
</dbReference>
<dbReference type="CDD" id="cd07160">
    <property type="entry name" value="NR_DBD_LXR"/>
    <property type="match status" value="1"/>
</dbReference>
<dbReference type="CDD" id="cd06954">
    <property type="entry name" value="NR_LBD_LXR"/>
    <property type="match status" value="1"/>
</dbReference>
<dbReference type="FunFam" id="1.10.565.10:FF:000014">
    <property type="entry name" value="Oxysterols receptor LXR-alpha isoform 1"/>
    <property type="match status" value="1"/>
</dbReference>
<dbReference type="FunFam" id="3.30.50.10:FF:000017">
    <property type="entry name" value="Oxysterols receptor LXR-alpha isoform 1"/>
    <property type="match status" value="1"/>
</dbReference>
<dbReference type="Gene3D" id="3.30.50.10">
    <property type="entry name" value="Erythroid Transcription Factor GATA-1, subunit A"/>
    <property type="match status" value="1"/>
</dbReference>
<dbReference type="Gene3D" id="1.10.565.10">
    <property type="entry name" value="Retinoid X Receptor"/>
    <property type="match status" value="1"/>
</dbReference>
<dbReference type="InterPro" id="IPR023257">
    <property type="entry name" value="Liver_X_rcpt"/>
</dbReference>
<dbReference type="InterPro" id="IPR035500">
    <property type="entry name" value="NHR-like_dom_sf"/>
</dbReference>
<dbReference type="InterPro" id="IPR000536">
    <property type="entry name" value="Nucl_hrmn_rcpt_lig-bd"/>
</dbReference>
<dbReference type="InterPro" id="IPR050234">
    <property type="entry name" value="Nuclear_hormone_rcpt_NR1"/>
</dbReference>
<dbReference type="InterPro" id="IPR001723">
    <property type="entry name" value="Nuclear_hrmn_rcpt"/>
</dbReference>
<dbReference type="InterPro" id="IPR001628">
    <property type="entry name" value="Znf_hrmn_rcpt"/>
</dbReference>
<dbReference type="InterPro" id="IPR013088">
    <property type="entry name" value="Znf_NHR/GATA"/>
</dbReference>
<dbReference type="PANTHER" id="PTHR24082">
    <property type="entry name" value="NUCLEAR HORMONE RECEPTOR"/>
    <property type="match status" value="1"/>
</dbReference>
<dbReference type="PANTHER" id="PTHR24082:SF316">
    <property type="entry name" value="OXYSTEROLS RECEPTOR LXR-BETA"/>
    <property type="match status" value="1"/>
</dbReference>
<dbReference type="Pfam" id="PF00104">
    <property type="entry name" value="Hormone_recep"/>
    <property type="match status" value="1"/>
</dbReference>
<dbReference type="Pfam" id="PF00105">
    <property type="entry name" value="zf-C4"/>
    <property type="match status" value="1"/>
</dbReference>
<dbReference type="PRINTS" id="PR02034">
    <property type="entry name" value="LIVERXRECPTR"/>
</dbReference>
<dbReference type="PRINTS" id="PR00398">
    <property type="entry name" value="STRDHORMONER"/>
</dbReference>
<dbReference type="PRINTS" id="PR00047">
    <property type="entry name" value="STROIDFINGER"/>
</dbReference>
<dbReference type="SMART" id="SM00430">
    <property type="entry name" value="HOLI"/>
    <property type="match status" value="1"/>
</dbReference>
<dbReference type="SMART" id="SM00399">
    <property type="entry name" value="ZnF_C4"/>
    <property type="match status" value="1"/>
</dbReference>
<dbReference type="SUPFAM" id="SSF57716">
    <property type="entry name" value="Glucocorticoid receptor-like (DNA-binding domain)"/>
    <property type="match status" value="1"/>
</dbReference>
<dbReference type="SUPFAM" id="SSF48508">
    <property type="entry name" value="Nuclear receptor ligand-binding domain"/>
    <property type="match status" value="1"/>
</dbReference>
<dbReference type="PROSITE" id="PS51843">
    <property type="entry name" value="NR_LBD"/>
    <property type="match status" value="1"/>
</dbReference>
<dbReference type="PROSITE" id="PS00031">
    <property type="entry name" value="NUCLEAR_REC_DBD_1"/>
    <property type="match status" value="1"/>
</dbReference>
<dbReference type="PROSITE" id="PS51030">
    <property type="entry name" value="NUCLEAR_REC_DBD_2"/>
    <property type="match status" value="1"/>
</dbReference>
<name>NR1H2_BOVIN</name>
<reference key="1">
    <citation type="journal article" date="2005" name="BMC Genomics">
        <title>Characterization of 954 bovine full-CDS cDNA sequences.</title>
        <authorList>
            <person name="Harhay G.P."/>
            <person name="Sonstegard T.S."/>
            <person name="Keele J.W."/>
            <person name="Heaton M.P."/>
            <person name="Clawson M.L."/>
            <person name="Snelling W.M."/>
            <person name="Wiedmann R.T."/>
            <person name="Van Tassell C.P."/>
            <person name="Smith T.P.L."/>
        </authorList>
    </citation>
    <scope>NUCLEOTIDE SEQUENCE [LARGE SCALE MRNA]</scope>
</reference>
<reference key="2">
    <citation type="submission" date="2005-11" db="EMBL/GenBank/DDBJ databases">
        <authorList>
            <consortium name="NIH - Mammalian Gene Collection (MGC) project"/>
        </authorList>
    </citation>
    <scope>NUCLEOTIDE SEQUENCE [LARGE SCALE MRNA]</scope>
    <source>
        <strain>Crossbred X Angus</strain>
        <tissue>Liver</tissue>
    </source>
</reference>
<protein>
    <recommendedName>
        <fullName>Oxysterols receptor LXR-beta</fullName>
    </recommendedName>
    <alternativeName>
        <fullName>Liver X receptor beta</fullName>
    </alternativeName>
    <alternativeName>
        <fullName>Nuclear receptor subfamily 1 group H member 2</fullName>
    </alternativeName>
</protein>
<organism>
    <name type="scientific">Bos taurus</name>
    <name type="common">Bovine</name>
    <dbReference type="NCBI Taxonomy" id="9913"/>
    <lineage>
        <taxon>Eukaryota</taxon>
        <taxon>Metazoa</taxon>
        <taxon>Chordata</taxon>
        <taxon>Craniata</taxon>
        <taxon>Vertebrata</taxon>
        <taxon>Euteleostomi</taxon>
        <taxon>Mammalia</taxon>
        <taxon>Eutheria</taxon>
        <taxon>Laurasiatheria</taxon>
        <taxon>Artiodactyla</taxon>
        <taxon>Ruminantia</taxon>
        <taxon>Pecora</taxon>
        <taxon>Bovidae</taxon>
        <taxon>Bovinae</taxon>
        <taxon>Bos</taxon>
    </lineage>
</organism>
<sequence>MSTPTTNSVDTPLPGNGPSTPSSSPGGKEDGPEPCPGGADPDVPSTDGADSASVVVILDTAEEPERKRKKGPAPKMLGDELCQVCGDTASGFHYNVLSCEGCKGFFRRSVIRGGAGRYACRGGGTCQMDAFMRRKCQQCRLRKCKEAGMREQCVLSKEQIRKKKIRKQQQQQQQQSSPTGPGVSSSSPASGPGASPGGSDGGGQGSGEGEGVQLTAAQELMIQQLVAAQLQCNKRSFSDQPKVTPWPLGADPQSRDARQQRFAHFTELAIISVQEIVDFAKQVPGFLQLGREDQIALLKASTIEIMLLETARRYNHETECITFLKDFTYSKDDFHRAGLQVEFINPIFEFSRAMRRLGLDDAEYALLIAINIFSADRPNVQEPSRVEALQQPYVDALLSYTRIKRPQDQLRFPRMLMKLVSLRTLSSVHSEQVFALRLQDKKLPPLLSEIWDVHE</sequence>
<comment type="function">
    <text evidence="1 2">Nuclear receptor that exhibits a ligand-dependent transcriptional activation activity (By similarity). Binds preferentially to double-stranded oligonucleotide direct repeats having the consensus half-site sequence 5'-AGGTCA-3' and 4-nt spacing (DR-4). Regulates cholesterol uptake through MYLIP-dependent ubiquitination of LDLR, VLDLR and LRP8; DLDLR and LRP8. Interplays functionally with RORA for the regulation of genes involved in liver metabolism (By similarity). Induces LPCAT3-dependent phospholipid remodeling in endoplasmic reticulum (ER) membranes of hepatocytes, driving SREBF1 processing and lipogenesis (By similarity). Via LPCAT3, triggers the incorporation of arachidonate into phosphatidylcholines of ER membranes, increasing membrane dynamics and enabling triacylglycerols transfer to nascent very low-density lipoprotein (VLDL) particles. Via LPCAT3 also counteracts lipid-induced ER stress response and inflammation, likely by modulating SRC kinase membrane compartmentalization and limiting the synthesis of lipid inflammatory mediators (By similarity). Plays an anti-inflammatory role during the hepatic acute phase response by acting as a corepressor: inhibits the hepatic acute phase response by preventing dissociation of the N-Cor corepressor complex (By similarity).</text>
</comment>
<comment type="subunit">
    <text evidence="1">Forms a heterodimer with RXR. Interacts with CCAR2 (via N-terminus) in a ligand-independent manner. Interacts (when sumoylated) with GPS2; interaction with GPS2 onto hepatic acute phase protein promoters prevents N-Cor corepressor complex dissociation (By similarity). Interacts with ABCA12 and ABCA1; this interaction is required for ABCA1 localization to the cell surface and is necessary for its normal activity and stability (By similarity).</text>
</comment>
<comment type="subcellular location">
    <subcellularLocation>
        <location evidence="3">Nucleus</location>
    </subcellularLocation>
</comment>
<comment type="PTM">
    <text evidence="1">Sumoylated by SUMO2 at Lys-404 and Lys-442 during the hepatic acute phase response, leading to promote interaction with GPS2 and prevent N-Cor corepressor complex dissociation.</text>
</comment>
<comment type="similarity">
    <text evidence="6">Belongs to the nuclear hormone receptor family. NR1 subfamily.</text>
</comment>
<feature type="chain" id="PRO_0000053531" description="Oxysterols receptor LXR-beta">
    <location>
        <begin position="1"/>
        <end position="455"/>
    </location>
</feature>
<feature type="domain" description="NR LBD" evidence="4">
    <location>
        <begin position="217"/>
        <end position="455"/>
    </location>
</feature>
<feature type="DNA-binding region" description="Nuclear receptor" evidence="3">
    <location>
        <begin position="79"/>
        <end position="156"/>
    </location>
</feature>
<feature type="zinc finger region" description="NR C4-type" evidence="3">
    <location>
        <begin position="82"/>
        <end position="102"/>
    </location>
</feature>
<feature type="zinc finger region" description="NR C4-type" evidence="3">
    <location>
        <begin position="120"/>
        <end position="144"/>
    </location>
</feature>
<feature type="region of interest" description="Transactivation AF-1; required for ligand-independent transactivation function" evidence="1">
    <location>
        <begin position="1"/>
        <end position="80"/>
    </location>
</feature>
<feature type="region of interest" description="Disordered" evidence="5">
    <location>
        <begin position="1"/>
        <end position="53"/>
    </location>
</feature>
<feature type="region of interest" description="Disordered" evidence="5">
    <location>
        <begin position="164"/>
        <end position="210"/>
    </location>
</feature>
<feature type="region of interest" description="Transactivation AF-2; required for ligand-dependent transactivation function; mediates interaction with CCAR2" evidence="1">
    <location>
        <begin position="214"/>
        <end position="455"/>
    </location>
</feature>
<feature type="compositionally biased region" description="Polar residues" evidence="5">
    <location>
        <begin position="1"/>
        <end position="10"/>
    </location>
</feature>
<feature type="compositionally biased region" description="Low complexity" evidence="5">
    <location>
        <begin position="14"/>
        <end position="26"/>
    </location>
</feature>
<feature type="compositionally biased region" description="Low complexity" evidence="5">
    <location>
        <begin position="168"/>
        <end position="193"/>
    </location>
</feature>
<feature type="compositionally biased region" description="Gly residues" evidence="5">
    <location>
        <begin position="194"/>
        <end position="210"/>
    </location>
</feature>
<feature type="cross-link" description="Glycyl lysine isopeptide (Lys-Gly) (interchain with G-Cter in SUMO2)" evidence="1">
    <location>
        <position position="404"/>
    </location>
</feature>
<feature type="cross-link" description="Glycyl lysine isopeptide (Lys-Gly) (interchain with G-Cter in SUMO2)" evidence="1">
    <location>
        <position position="442"/>
    </location>
</feature>
<gene>
    <name type="primary">NR1H2</name>
    <name type="synonym">LXRB</name>
</gene>
<accession>Q5BIS6</accession>
<accession>Q32KU5</accession>
<evidence type="ECO:0000250" key="1">
    <source>
        <dbReference type="UniProtKB" id="P55055"/>
    </source>
</evidence>
<evidence type="ECO:0000250" key="2">
    <source>
        <dbReference type="UniProtKB" id="Q60644"/>
    </source>
</evidence>
<evidence type="ECO:0000255" key="3">
    <source>
        <dbReference type="PROSITE-ProRule" id="PRU00407"/>
    </source>
</evidence>
<evidence type="ECO:0000255" key="4">
    <source>
        <dbReference type="PROSITE-ProRule" id="PRU01189"/>
    </source>
</evidence>
<evidence type="ECO:0000256" key="5">
    <source>
        <dbReference type="SAM" id="MobiDB-lite"/>
    </source>
</evidence>
<evidence type="ECO:0000305" key="6"/>
<proteinExistence type="evidence at transcript level"/>
<keyword id="KW-0010">Activator</keyword>
<keyword id="KW-0238">DNA-binding</keyword>
<keyword id="KW-1017">Isopeptide bond</keyword>
<keyword id="KW-0479">Metal-binding</keyword>
<keyword id="KW-0539">Nucleus</keyword>
<keyword id="KW-0675">Receptor</keyword>
<keyword id="KW-1185">Reference proteome</keyword>
<keyword id="KW-0804">Transcription</keyword>
<keyword id="KW-0805">Transcription regulation</keyword>
<keyword id="KW-0832">Ubl conjugation</keyword>
<keyword id="KW-0862">Zinc</keyword>
<keyword id="KW-0863">Zinc-finger</keyword>